<dbReference type="EC" id="2.5.1.41" evidence="1 2"/>
<dbReference type="EMBL" id="CP000745">
    <property type="protein sequence ID" value="ABR66071.1"/>
    <property type="molecule type" value="Genomic_DNA"/>
</dbReference>
<dbReference type="SMR" id="A6VHZ5"/>
<dbReference type="STRING" id="426368.MmarC7_1004"/>
<dbReference type="KEGG" id="mmz:MmarC7_1004"/>
<dbReference type="eggNOG" id="arCOG01085">
    <property type="taxonomic scope" value="Archaea"/>
</dbReference>
<dbReference type="HOGENOM" id="CLU_068610_0_0_2"/>
<dbReference type="OrthoDB" id="7409at2157"/>
<dbReference type="UniPathway" id="UPA00940"/>
<dbReference type="GO" id="GO:0005737">
    <property type="term" value="C:cytoplasm"/>
    <property type="evidence" value="ECO:0007669"/>
    <property type="project" value="UniProtKB-SubCell"/>
</dbReference>
<dbReference type="GO" id="GO:0000107">
    <property type="term" value="F:imidazoleglycerol-phosphate synthase activity"/>
    <property type="evidence" value="ECO:0007669"/>
    <property type="project" value="TreeGrafter"/>
</dbReference>
<dbReference type="GO" id="GO:0000287">
    <property type="term" value="F:magnesium ion binding"/>
    <property type="evidence" value="ECO:0007669"/>
    <property type="project" value="UniProtKB-UniRule"/>
</dbReference>
<dbReference type="GO" id="GO:0047294">
    <property type="term" value="F:phosphoglycerol geranylgeranyltransferase activity"/>
    <property type="evidence" value="ECO:0007669"/>
    <property type="project" value="UniProtKB-UniRule"/>
</dbReference>
<dbReference type="GO" id="GO:0046474">
    <property type="term" value="P:glycerophospholipid biosynthetic process"/>
    <property type="evidence" value="ECO:0007669"/>
    <property type="project" value="UniProtKB-UniRule"/>
</dbReference>
<dbReference type="Gene3D" id="3.20.20.390">
    <property type="entry name" value="FMN-linked oxidoreductases"/>
    <property type="match status" value="1"/>
</dbReference>
<dbReference type="HAMAP" id="MF_00112">
    <property type="entry name" value="GGGP_HepGP_synthase"/>
    <property type="match status" value="1"/>
</dbReference>
<dbReference type="InterPro" id="IPR038597">
    <property type="entry name" value="GGGP/HepGP_synthase_sf"/>
</dbReference>
<dbReference type="InterPro" id="IPR008205">
    <property type="entry name" value="GGGP_HepGP_synthase"/>
</dbReference>
<dbReference type="InterPro" id="IPR010946">
    <property type="entry name" value="GGGP_synth"/>
</dbReference>
<dbReference type="InterPro" id="IPR050064">
    <property type="entry name" value="IGPS_HisA/HisF"/>
</dbReference>
<dbReference type="NCBIfam" id="TIGR01769">
    <property type="entry name" value="GGGP"/>
    <property type="match status" value="1"/>
</dbReference>
<dbReference type="NCBIfam" id="TIGR01768">
    <property type="entry name" value="GGGP-family"/>
    <property type="match status" value="1"/>
</dbReference>
<dbReference type="NCBIfam" id="NF003198">
    <property type="entry name" value="PRK04169.1-2"/>
    <property type="match status" value="1"/>
</dbReference>
<dbReference type="NCBIfam" id="NF003201">
    <property type="entry name" value="PRK04169.1-5"/>
    <property type="match status" value="1"/>
</dbReference>
<dbReference type="PANTHER" id="PTHR21235:SF22">
    <property type="entry name" value="GERANYLGERANYLGLYCERYL PHOSPHATE SYNTHASE"/>
    <property type="match status" value="1"/>
</dbReference>
<dbReference type="PANTHER" id="PTHR21235">
    <property type="entry name" value="IMIDAZOLE GLYCEROL PHOSPHATE SYNTHASE SUBUNIT HISF/H IGP SYNTHASE SUBUNIT HISF/H"/>
    <property type="match status" value="1"/>
</dbReference>
<dbReference type="Pfam" id="PF01884">
    <property type="entry name" value="PcrB"/>
    <property type="match status" value="1"/>
</dbReference>
<dbReference type="SUPFAM" id="SSF51395">
    <property type="entry name" value="FMN-linked oxidoreductases"/>
    <property type="match status" value="1"/>
</dbReference>
<proteinExistence type="evidence at protein level"/>
<accession>A6VHZ5</accession>
<organism>
    <name type="scientific">Methanococcus maripaludis (strain C7 / ATCC BAA-1331)</name>
    <dbReference type="NCBI Taxonomy" id="426368"/>
    <lineage>
        <taxon>Archaea</taxon>
        <taxon>Methanobacteriati</taxon>
        <taxon>Methanobacteriota</taxon>
        <taxon>Methanomada group</taxon>
        <taxon>Methanococci</taxon>
        <taxon>Methanococcales</taxon>
        <taxon>Methanococcaceae</taxon>
        <taxon>Methanococcus</taxon>
    </lineage>
</organism>
<comment type="function">
    <text evidence="1 2">Prenyltransferase that catalyzes the transfer of the geranylgeranyl moiety of geranylgeranyl diphosphate (GGPP) to the C3 hydroxyl of sn-glycerol-1-phosphate (G1P). This reaction is the first ether-bond-formation step in the biosynthesis of archaeal membrane lipids.</text>
</comment>
<comment type="catalytic activity">
    <reaction evidence="1 2">
        <text>sn-glycerol 1-phosphate + (2E,6E,10E)-geranylgeranyl diphosphate = sn-3-O-(geranylgeranyl)glycerol 1-phosphate + diphosphate</text>
        <dbReference type="Rhea" id="RHEA:23404"/>
        <dbReference type="ChEBI" id="CHEBI:33019"/>
        <dbReference type="ChEBI" id="CHEBI:57677"/>
        <dbReference type="ChEBI" id="CHEBI:57685"/>
        <dbReference type="ChEBI" id="CHEBI:58756"/>
        <dbReference type="EC" id="2.5.1.41"/>
    </reaction>
</comment>
<comment type="cofactor">
    <cofactor evidence="1 2">
        <name>Mg(2+)</name>
        <dbReference type="ChEBI" id="CHEBI:18420"/>
    </cofactor>
</comment>
<comment type="pathway">
    <text evidence="1 2">Membrane lipid metabolism; glycerophospholipid metabolism.</text>
</comment>
<comment type="subcellular location">
    <subcellularLocation>
        <location evidence="1">Cytoplasm</location>
    </subcellularLocation>
</comment>
<comment type="similarity">
    <text evidence="1">Belongs to the GGGP/HepGP synthase family. Group II subfamily.</text>
</comment>
<sequence length="256" mass="27842">MQIKIGEVESKLNKIIEEDGAAYFVLIDPDEKNYREIANHVKNYADAIIIGGSIGIISLDEVTKEIKEITGLPVILFPGNVDGVTKEADAVLFMTLMNSKNTYWNMTAPTLGALTIKKYGLETLPMAYLGIEPISKTAVGFVGEVNEIPQKKPEIAGIYSLSASYFGMRWVYLEAGSGAEYPVNNEMIGISKKLSGINIIVGGGIRTPEVAYEKVMSGADVIVTGTLTEKDPEAVKEMKKAIKKAGMDKLKMLSKK</sequence>
<name>GGGPS_METM7</name>
<evidence type="ECO:0000255" key="1">
    <source>
        <dbReference type="HAMAP-Rule" id="MF_00112"/>
    </source>
</evidence>
<evidence type="ECO:0000269" key="2">
    <source>
    </source>
</evidence>
<evidence type="ECO:0000303" key="3">
    <source>
    </source>
</evidence>
<keyword id="KW-0963">Cytoplasm</keyword>
<keyword id="KW-0444">Lipid biosynthesis</keyword>
<keyword id="KW-0443">Lipid metabolism</keyword>
<keyword id="KW-0460">Magnesium</keyword>
<keyword id="KW-0479">Metal-binding</keyword>
<keyword id="KW-0594">Phospholipid biosynthesis</keyword>
<keyword id="KW-1208">Phospholipid metabolism</keyword>
<keyword id="KW-0808">Transferase</keyword>
<gene>
    <name type="ordered locus">MmarC7_1004</name>
</gene>
<protein>
    <recommendedName>
        <fullName evidence="1">Geranylgeranylglyceryl phosphate synthase</fullName>
        <shortName evidence="1 3">GGGP synthase</shortName>
        <shortName evidence="1">GGGPS</shortName>
        <ecNumber evidence="1 2">2.5.1.41</ecNumber>
    </recommendedName>
    <alternativeName>
        <fullName evidence="1">(S)-3-O-geranylgeranylglyceryl phosphate synthase</fullName>
    </alternativeName>
    <alternativeName>
        <fullName evidence="1">Phosphoglycerol geranylgeranyltransferase</fullName>
    </alternativeName>
</protein>
<feature type="chain" id="PRO_1000015166" description="Geranylgeranylglyceryl phosphate synthase">
    <location>
        <begin position="1"/>
        <end position="256"/>
    </location>
</feature>
<feature type="binding site" evidence="1">
    <location>
        <position position="28"/>
    </location>
    <ligand>
        <name>Mg(2+)</name>
        <dbReference type="ChEBI" id="CHEBI:18420"/>
    </ligand>
</feature>
<feature type="binding site" evidence="1">
    <location>
        <position position="53"/>
    </location>
    <ligand>
        <name>Mg(2+)</name>
        <dbReference type="ChEBI" id="CHEBI:18420"/>
    </ligand>
</feature>
<feature type="binding site" evidence="1">
    <location>
        <begin position="172"/>
        <end position="178"/>
    </location>
    <ligand>
        <name>sn-glycerol 1-phosphate</name>
        <dbReference type="ChEBI" id="CHEBI:57685"/>
    </ligand>
</feature>
<feature type="binding site" evidence="1">
    <location>
        <begin position="203"/>
        <end position="204"/>
    </location>
    <ligand>
        <name>sn-glycerol 1-phosphate</name>
        <dbReference type="ChEBI" id="CHEBI:57685"/>
    </ligand>
</feature>
<feature type="binding site" evidence="1">
    <location>
        <begin position="225"/>
        <end position="226"/>
    </location>
    <ligand>
        <name>sn-glycerol 1-phosphate</name>
        <dbReference type="ChEBI" id="CHEBI:57685"/>
    </ligand>
</feature>
<reference key="1">
    <citation type="submission" date="2007-06" db="EMBL/GenBank/DDBJ databases">
        <title>Complete sequence of Methanococcus maripaludis C7.</title>
        <authorList>
            <consortium name="US DOE Joint Genome Institute"/>
            <person name="Copeland A."/>
            <person name="Lucas S."/>
            <person name="Lapidus A."/>
            <person name="Barry K."/>
            <person name="Glavina del Rio T."/>
            <person name="Dalin E."/>
            <person name="Tice H."/>
            <person name="Pitluck S."/>
            <person name="Clum A."/>
            <person name="Schmutz J."/>
            <person name="Larimer F."/>
            <person name="Land M."/>
            <person name="Hauser L."/>
            <person name="Kyrpides N."/>
            <person name="Anderson I."/>
            <person name="Sieprawska-Lupa M."/>
            <person name="Whitman W.B."/>
            <person name="Richardson P."/>
        </authorList>
    </citation>
    <scope>NUCLEOTIDE SEQUENCE [LARGE SCALE GENOMIC DNA]</scope>
    <source>
        <strain>C7 / ATCC BAA-1331</strain>
    </source>
</reference>
<reference key="2">
    <citation type="journal article" date="2014" name="Chem. Biol.">
        <title>Identification of CDP-archaeol synthase, a missing link of ether lipid biosynthesis in Archaea.</title>
        <authorList>
            <person name="Jain S."/>
            <person name="Caforio A."/>
            <person name="Fodran P."/>
            <person name="Lolkema J.S."/>
            <person name="Minnaard A.J."/>
            <person name="Driessen A.J."/>
        </authorList>
    </citation>
    <scope>FUNCTION</scope>
    <scope>CATALYTIC ACTIVITY</scope>
    <scope>COFACTOR</scope>
    <scope>PATHWAY</scope>
</reference>